<accession>Q9KGF8</accession>
<gene>
    <name evidence="1" type="primary">ispD</name>
    <name type="ordered locus">BH0107</name>
</gene>
<reference key="1">
    <citation type="journal article" date="2000" name="Nucleic Acids Res.">
        <title>Complete genome sequence of the alkaliphilic bacterium Bacillus halodurans and genomic sequence comparison with Bacillus subtilis.</title>
        <authorList>
            <person name="Takami H."/>
            <person name="Nakasone K."/>
            <person name="Takaki Y."/>
            <person name="Maeno G."/>
            <person name="Sasaki R."/>
            <person name="Masui N."/>
            <person name="Fuji F."/>
            <person name="Hirama C."/>
            <person name="Nakamura Y."/>
            <person name="Ogasawara N."/>
            <person name="Kuhara S."/>
            <person name="Horikoshi K."/>
        </authorList>
    </citation>
    <scope>NUCLEOTIDE SEQUENCE [LARGE SCALE GENOMIC DNA]</scope>
    <source>
        <strain>ATCC BAA-125 / DSM 18197 / FERM 7344 / JCM 9153 / C-125</strain>
    </source>
</reference>
<protein>
    <recommendedName>
        <fullName evidence="1">2-C-methyl-D-erythritol 4-phosphate cytidylyltransferase</fullName>
        <ecNumber evidence="1">2.7.7.60</ecNumber>
    </recommendedName>
    <alternativeName>
        <fullName evidence="1">4-diphosphocytidyl-2C-methyl-D-erythritol synthase</fullName>
    </alternativeName>
    <alternativeName>
        <fullName evidence="1">MEP cytidylyltransferase</fullName>
        <shortName evidence="1">MCT</shortName>
    </alternativeName>
</protein>
<name>ISPD_HALH5</name>
<comment type="function">
    <text evidence="1">Catalyzes the formation of 4-diphosphocytidyl-2-C-methyl-D-erythritol from CTP and 2-C-methyl-D-erythritol 4-phosphate (MEP).</text>
</comment>
<comment type="catalytic activity">
    <reaction evidence="1">
        <text>2-C-methyl-D-erythritol 4-phosphate + CTP + H(+) = 4-CDP-2-C-methyl-D-erythritol + diphosphate</text>
        <dbReference type="Rhea" id="RHEA:13429"/>
        <dbReference type="ChEBI" id="CHEBI:15378"/>
        <dbReference type="ChEBI" id="CHEBI:33019"/>
        <dbReference type="ChEBI" id="CHEBI:37563"/>
        <dbReference type="ChEBI" id="CHEBI:57823"/>
        <dbReference type="ChEBI" id="CHEBI:58262"/>
        <dbReference type="EC" id="2.7.7.60"/>
    </reaction>
</comment>
<comment type="pathway">
    <text evidence="1">Isoprenoid biosynthesis; isopentenyl diphosphate biosynthesis via DXP pathway; isopentenyl diphosphate from 1-deoxy-D-xylulose 5-phosphate: step 2/6.</text>
</comment>
<comment type="similarity">
    <text evidence="1">Belongs to the IspD/TarI cytidylyltransferase family. IspD subfamily.</text>
</comment>
<keyword id="KW-0414">Isoprene biosynthesis</keyword>
<keyword id="KW-0548">Nucleotidyltransferase</keyword>
<keyword id="KW-1185">Reference proteome</keyword>
<keyword id="KW-0808">Transferase</keyword>
<feature type="chain" id="PRO_0000075549" description="2-C-methyl-D-erythritol 4-phosphate cytidylyltransferase">
    <location>
        <begin position="1"/>
        <end position="228"/>
    </location>
</feature>
<feature type="site" description="Transition state stabilizer" evidence="1">
    <location>
        <position position="15"/>
    </location>
</feature>
<feature type="site" description="Transition state stabilizer" evidence="1">
    <location>
        <position position="22"/>
    </location>
</feature>
<feature type="site" description="Positions MEP for the nucleophilic attack" evidence="1">
    <location>
        <position position="152"/>
    </location>
</feature>
<feature type="site" description="Positions MEP for the nucleophilic attack" evidence="1">
    <location>
        <position position="208"/>
    </location>
</feature>
<evidence type="ECO:0000255" key="1">
    <source>
        <dbReference type="HAMAP-Rule" id="MF_00108"/>
    </source>
</evidence>
<dbReference type="EC" id="2.7.7.60" evidence="1"/>
<dbReference type="EMBL" id="BA000004">
    <property type="protein sequence ID" value="BAB03826.1"/>
    <property type="molecule type" value="Genomic_DNA"/>
</dbReference>
<dbReference type="PIR" id="C83663">
    <property type="entry name" value="C83663"/>
</dbReference>
<dbReference type="RefSeq" id="WP_010896290.1">
    <property type="nucleotide sequence ID" value="NC_002570.2"/>
</dbReference>
<dbReference type="SMR" id="Q9KGF8"/>
<dbReference type="STRING" id="272558.gene:10725947"/>
<dbReference type="GeneID" id="87595650"/>
<dbReference type="KEGG" id="bha:BH0107"/>
<dbReference type="eggNOG" id="COG1211">
    <property type="taxonomic scope" value="Bacteria"/>
</dbReference>
<dbReference type="HOGENOM" id="CLU_061281_2_2_9"/>
<dbReference type="OrthoDB" id="9806837at2"/>
<dbReference type="UniPathway" id="UPA00056">
    <property type="reaction ID" value="UER00093"/>
</dbReference>
<dbReference type="Proteomes" id="UP000001258">
    <property type="component" value="Chromosome"/>
</dbReference>
<dbReference type="GO" id="GO:0050518">
    <property type="term" value="F:2-C-methyl-D-erythritol 4-phosphate cytidylyltransferase activity"/>
    <property type="evidence" value="ECO:0007669"/>
    <property type="project" value="UniProtKB-UniRule"/>
</dbReference>
<dbReference type="GO" id="GO:0019288">
    <property type="term" value="P:isopentenyl diphosphate biosynthetic process, methylerythritol 4-phosphate pathway"/>
    <property type="evidence" value="ECO:0007669"/>
    <property type="project" value="UniProtKB-UniRule"/>
</dbReference>
<dbReference type="CDD" id="cd02516">
    <property type="entry name" value="CDP-ME_synthetase"/>
    <property type="match status" value="1"/>
</dbReference>
<dbReference type="FunFam" id="3.90.550.10:FF:000003">
    <property type="entry name" value="2-C-methyl-D-erythritol 4-phosphate cytidylyltransferase"/>
    <property type="match status" value="1"/>
</dbReference>
<dbReference type="Gene3D" id="3.90.550.10">
    <property type="entry name" value="Spore Coat Polysaccharide Biosynthesis Protein SpsA, Chain A"/>
    <property type="match status" value="1"/>
</dbReference>
<dbReference type="HAMAP" id="MF_00108">
    <property type="entry name" value="IspD"/>
    <property type="match status" value="1"/>
</dbReference>
<dbReference type="InterPro" id="IPR001228">
    <property type="entry name" value="IspD"/>
</dbReference>
<dbReference type="InterPro" id="IPR034683">
    <property type="entry name" value="IspD/TarI"/>
</dbReference>
<dbReference type="InterPro" id="IPR050088">
    <property type="entry name" value="IspD/TarI_cytidylyltransf_bact"/>
</dbReference>
<dbReference type="InterPro" id="IPR018294">
    <property type="entry name" value="ISPD_synthase_CS"/>
</dbReference>
<dbReference type="InterPro" id="IPR029044">
    <property type="entry name" value="Nucleotide-diphossugar_trans"/>
</dbReference>
<dbReference type="NCBIfam" id="TIGR00453">
    <property type="entry name" value="ispD"/>
    <property type="match status" value="1"/>
</dbReference>
<dbReference type="PANTHER" id="PTHR32125">
    <property type="entry name" value="2-C-METHYL-D-ERYTHRITOL 4-PHOSPHATE CYTIDYLYLTRANSFERASE, CHLOROPLASTIC"/>
    <property type="match status" value="1"/>
</dbReference>
<dbReference type="PANTHER" id="PTHR32125:SF4">
    <property type="entry name" value="2-C-METHYL-D-ERYTHRITOL 4-PHOSPHATE CYTIDYLYLTRANSFERASE, CHLOROPLASTIC"/>
    <property type="match status" value="1"/>
</dbReference>
<dbReference type="Pfam" id="PF01128">
    <property type="entry name" value="IspD"/>
    <property type="match status" value="1"/>
</dbReference>
<dbReference type="SUPFAM" id="SSF53448">
    <property type="entry name" value="Nucleotide-diphospho-sugar transferases"/>
    <property type="match status" value="1"/>
</dbReference>
<dbReference type="PROSITE" id="PS01295">
    <property type="entry name" value="ISPD"/>
    <property type="match status" value="1"/>
</dbReference>
<organism>
    <name type="scientific">Halalkalibacterium halodurans (strain ATCC BAA-125 / DSM 18197 / FERM 7344 / JCM 9153 / C-125)</name>
    <name type="common">Bacillus halodurans</name>
    <dbReference type="NCBI Taxonomy" id="272558"/>
    <lineage>
        <taxon>Bacteria</taxon>
        <taxon>Bacillati</taxon>
        <taxon>Bacillota</taxon>
        <taxon>Bacilli</taxon>
        <taxon>Bacillales</taxon>
        <taxon>Bacillaceae</taxon>
        <taxon>Halalkalibacterium (ex Joshi et al. 2022)</taxon>
    </lineage>
</organism>
<sequence length="228" mass="25270">MEYSVVIPAAGQGKRMRAGHNKQFIELGGKPILAHTLAVFEQDDWCTNVVIVANEQEIEEMGELANRYQISKAKKIVAGGRERQESVFAGLKALSQDGLVLIHDGARPFVTEKEIHSLVETAAKTHAAVLAVPVKDTIKRVEGEAVLETMPREELWAVQTPQAFDLALIKQAHQKAENEQMLGTDDASLMEWLGYSVAVVQGSYFNFKLTTPEDLLFAEAILAEKERR</sequence>
<proteinExistence type="inferred from homology"/>